<proteinExistence type="evidence at protein level"/>
<reference key="1">
    <citation type="journal article" date="1992" name="Gene">
        <title>Cloning and sequencing the Lactobacillus brevis gene encoding xylose isomerase.</title>
        <authorList>
            <person name="Bor Y.-C."/>
            <person name="Moraes C."/>
            <person name="Lee S.-P."/>
            <person name="Crosby W.L."/>
            <person name="Sinskey A.J."/>
            <person name="Batt C.A."/>
        </authorList>
    </citation>
    <scope>NUCLEOTIDE SEQUENCE [GENOMIC DNA]</scope>
    <scope>PROTEIN SEQUENCE OF 1-26</scope>
</reference>
<reference key="2">
    <citation type="journal article" date="1998" name="Appl. Environ. Microbiol.">
        <title>Molecular cloning and functional expression in Lactobacillus plantarum 80 of xylT, encoding the D-xylose-H+ symporter of Lactobacillus brevis.</title>
        <authorList>
            <person name="Chaillou S."/>
            <person name="Bor Y.-C."/>
            <person name="Batt C.A."/>
            <person name="Postma P.W."/>
            <person name="Pouwels P.H."/>
        </authorList>
    </citation>
    <scope>NUCLEOTIDE SEQUENCE [GENOMIC DNA]</scope>
    <scope>INDUCTION</scope>
</reference>
<accession>P29443</accession>
<keyword id="KW-0119">Carbohydrate metabolism</keyword>
<keyword id="KW-0963">Cytoplasm</keyword>
<keyword id="KW-0903">Direct protein sequencing</keyword>
<keyword id="KW-0413">Isomerase</keyword>
<keyword id="KW-0460">Magnesium</keyword>
<keyword id="KW-0479">Metal-binding</keyword>
<keyword id="KW-0859">Xylose metabolism</keyword>
<protein>
    <recommendedName>
        <fullName evidence="1 3">Xylose isomerase</fullName>
        <ecNumber evidence="1">5.3.1.5</ecNumber>
    </recommendedName>
</protein>
<dbReference type="EC" id="5.3.1.5" evidence="1"/>
<dbReference type="EMBL" id="M84564">
    <property type="protein sequence ID" value="AAA25256.1"/>
    <property type="molecule type" value="Genomic_DNA"/>
</dbReference>
<dbReference type="EMBL" id="AF045552">
    <property type="protein sequence ID" value="AAC95125.1"/>
    <property type="molecule type" value="Genomic_DNA"/>
</dbReference>
<dbReference type="PIR" id="JC1137">
    <property type="entry name" value="JC1137"/>
</dbReference>
<dbReference type="SMR" id="P29443"/>
<dbReference type="SABIO-RK" id="P29443"/>
<dbReference type="GO" id="GO:0005737">
    <property type="term" value="C:cytoplasm"/>
    <property type="evidence" value="ECO:0007669"/>
    <property type="project" value="UniProtKB-SubCell"/>
</dbReference>
<dbReference type="GO" id="GO:0000287">
    <property type="term" value="F:magnesium ion binding"/>
    <property type="evidence" value="ECO:0007669"/>
    <property type="project" value="UniProtKB-UniRule"/>
</dbReference>
<dbReference type="GO" id="GO:0009045">
    <property type="term" value="F:xylose isomerase activity"/>
    <property type="evidence" value="ECO:0007669"/>
    <property type="project" value="UniProtKB-UniRule"/>
</dbReference>
<dbReference type="GO" id="GO:0042732">
    <property type="term" value="P:D-xylose metabolic process"/>
    <property type="evidence" value="ECO:0007669"/>
    <property type="project" value="UniProtKB-UniRule"/>
</dbReference>
<dbReference type="Gene3D" id="3.20.20.150">
    <property type="entry name" value="Divalent-metal-dependent TIM barrel enzymes"/>
    <property type="match status" value="1"/>
</dbReference>
<dbReference type="HAMAP" id="MF_00455">
    <property type="entry name" value="Xylose_isom_A"/>
    <property type="match status" value="1"/>
</dbReference>
<dbReference type="InterPro" id="IPR036237">
    <property type="entry name" value="Xyl_isomerase-like_sf"/>
</dbReference>
<dbReference type="InterPro" id="IPR013452">
    <property type="entry name" value="Xylose_isom_bac"/>
</dbReference>
<dbReference type="InterPro" id="IPR001998">
    <property type="entry name" value="Xylose_isomerase"/>
</dbReference>
<dbReference type="NCBIfam" id="NF003998">
    <property type="entry name" value="PRK05474.1"/>
    <property type="match status" value="1"/>
</dbReference>
<dbReference type="NCBIfam" id="TIGR02630">
    <property type="entry name" value="xylose_isom_A"/>
    <property type="match status" value="1"/>
</dbReference>
<dbReference type="PANTHER" id="PTHR48408">
    <property type="match status" value="1"/>
</dbReference>
<dbReference type="PANTHER" id="PTHR48408:SF1">
    <property type="entry name" value="XYLOSE ISOMERASE"/>
    <property type="match status" value="1"/>
</dbReference>
<dbReference type="PRINTS" id="PR00688">
    <property type="entry name" value="XYLOSISMRASE"/>
</dbReference>
<dbReference type="SUPFAM" id="SSF51658">
    <property type="entry name" value="Xylose isomerase-like"/>
    <property type="match status" value="1"/>
</dbReference>
<dbReference type="PROSITE" id="PS51415">
    <property type="entry name" value="XYLOSE_ISOMERASE"/>
    <property type="match status" value="1"/>
</dbReference>
<feature type="chain" id="PRO_0000195781" description="Xylose isomerase">
    <location>
        <begin position="1"/>
        <end position="449"/>
    </location>
</feature>
<feature type="active site" evidence="1">
    <location>
        <position position="103"/>
    </location>
</feature>
<feature type="active site" evidence="1">
    <location>
        <position position="106"/>
    </location>
</feature>
<feature type="binding site" evidence="1">
    <location>
        <position position="234"/>
    </location>
    <ligand>
        <name>Mg(2+)</name>
        <dbReference type="ChEBI" id="CHEBI:18420"/>
        <label>1</label>
    </ligand>
</feature>
<feature type="binding site" evidence="1">
    <location>
        <position position="270"/>
    </location>
    <ligand>
        <name>Mg(2+)</name>
        <dbReference type="ChEBI" id="CHEBI:18420"/>
        <label>1</label>
    </ligand>
</feature>
<feature type="binding site" evidence="1">
    <location>
        <position position="270"/>
    </location>
    <ligand>
        <name>Mg(2+)</name>
        <dbReference type="ChEBI" id="CHEBI:18420"/>
        <label>2</label>
    </ligand>
</feature>
<feature type="binding site" evidence="1">
    <location>
        <position position="273"/>
    </location>
    <ligand>
        <name>Mg(2+)</name>
        <dbReference type="ChEBI" id="CHEBI:18420"/>
        <label>2</label>
    </ligand>
</feature>
<feature type="binding site" evidence="1">
    <location>
        <position position="298"/>
    </location>
    <ligand>
        <name>Mg(2+)</name>
        <dbReference type="ChEBI" id="CHEBI:18420"/>
        <label>1</label>
    </ligand>
</feature>
<feature type="binding site" evidence="1">
    <location>
        <position position="309"/>
    </location>
    <ligand>
        <name>Mg(2+)</name>
        <dbReference type="ChEBI" id="CHEBI:18420"/>
        <label>2</label>
    </ligand>
</feature>
<feature type="binding site" evidence="1">
    <location>
        <position position="311"/>
    </location>
    <ligand>
        <name>Mg(2+)</name>
        <dbReference type="ChEBI" id="CHEBI:18420"/>
        <label>2</label>
    </ligand>
</feature>
<feature type="binding site" evidence="1">
    <location>
        <position position="342"/>
    </location>
    <ligand>
        <name>Mg(2+)</name>
        <dbReference type="ChEBI" id="CHEBI:18420"/>
        <label>1</label>
    </ligand>
</feature>
<organism>
    <name type="scientific">Levilactobacillus brevis</name>
    <name type="common">Lactobacillus brevis</name>
    <dbReference type="NCBI Taxonomy" id="1580"/>
    <lineage>
        <taxon>Bacteria</taxon>
        <taxon>Bacillati</taxon>
        <taxon>Bacillota</taxon>
        <taxon>Bacilli</taxon>
        <taxon>Lactobacillales</taxon>
        <taxon>Lactobacillaceae</taxon>
        <taxon>Levilactobacillus</taxon>
    </lineage>
</organism>
<gene>
    <name evidence="1 3" type="primary">xylA</name>
</gene>
<evidence type="ECO:0000255" key="1">
    <source>
        <dbReference type="HAMAP-Rule" id="MF_00455"/>
    </source>
</evidence>
<evidence type="ECO:0000269" key="2">
    <source>
    </source>
</evidence>
<evidence type="ECO:0000303" key="3">
    <source>
    </source>
</evidence>
<name>XYLA_LEVBR</name>
<sequence length="449" mass="50757">MTEEYWKGVDKIQYVGHQDKKSGLGFQYYNPEEEIMGKKMKDWLRFAVAYWHTFDQRLVDPFGDGTAQRPYDKYTDPMDLALAKVDAAFEFYQKLGVDYLCFHDRDLAPEGDTLRETNANLDKVVDKIVEYQKTSGMKVLWNTSNMFTNPRFVEGAATSPYADVFAYSAAQLKHSLEIGKRVGSENYVFWGGREGYESLWNTNMKQEQEHAAKIFHMAKDYANEIGFDAQMLLEPKPKEPTTHQYDFDAATTIAFMKEYDLDKDFKLNLEGNHANLAGHTYQHEIRVAREAGLLGSLDANQGDKLIGWDIDEYPSNLYETTAAMYEVVENGSIGPRGGLNFDAKPRRSAFAPEDLFLGHIVGMDSFAAGLRVAAAMKQDGFLDNLKADRYSSYKSGVGADIESGKADLKSLEAYAIDKPQSELIAATHSDHLEEIKDTINHYIIDTLSK</sequence>
<comment type="catalytic activity">
    <reaction evidence="1">
        <text>alpha-D-xylose = alpha-D-xylulofuranose</text>
        <dbReference type="Rhea" id="RHEA:22816"/>
        <dbReference type="ChEBI" id="CHEBI:28518"/>
        <dbReference type="ChEBI" id="CHEBI:188998"/>
        <dbReference type="EC" id="5.3.1.5"/>
    </reaction>
</comment>
<comment type="cofactor">
    <cofactor evidence="1">
        <name>Mg(2+)</name>
        <dbReference type="ChEBI" id="CHEBI:18420"/>
    </cofactor>
    <text evidence="1">Binds 2 magnesium ions per subunit.</text>
</comment>
<comment type="subunit">
    <text evidence="1">Homotetramer.</text>
</comment>
<comment type="subcellular location">
    <subcellularLocation>
        <location evidence="1">Cytoplasm</location>
    </subcellularLocation>
</comment>
<comment type="induction">
    <text evidence="2">By D-xylose.</text>
</comment>
<comment type="similarity">
    <text evidence="1">Belongs to the xylose isomerase family.</text>
</comment>